<keyword id="KW-1185">Reference proteome</keyword>
<name>VG01_BPMD2</name>
<evidence type="ECO:0000256" key="1">
    <source>
        <dbReference type="SAM" id="MobiDB-lite"/>
    </source>
</evidence>
<protein>
    <recommendedName>
        <fullName>Gene 1 protein</fullName>
    </recommendedName>
    <alternativeName>
        <fullName>Gp1</fullName>
    </alternativeName>
</protein>
<dbReference type="EMBL" id="AF022214">
    <property type="protein sequence ID" value="AAC18444.1"/>
    <property type="molecule type" value="Genomic_DNA"/>
</dbReference>
<dbReference type="PIR" id="A72800">
    <property type="entry name" value="A72800"/>
</dbReference>
<dbReference type="RefSeq" id="NP_046819.1">
    <property type="nucleotide sequence ID" value="NC_001900.1"/>
</dbReference>
<dbReference type="GeneID" id="1261603"/>
<dbReference type="KEGG" id="vg:1261603"/>
<dbReference type="OrthoDB" id="6594at10239"/>
<dbReference type="Proteomes" id="UP000002131">
    <property type="component" value="Segment"/>
</dbReference>
<dbReference type="InterPro" id="IPR025530">
    <property type="entry name" value="DUF4417"/>
</dbReference>
<dbReference type="Pfam" id="PF14386">
    <property type="entry name" value="DUF4417"/>
    <property type="match status" value="1"/>
</dbReference>
<accession>O64197</accession>
<sequence>MYGTRSSAYWSTQPGKFDVLNLRMTFPSSSAYEIPDLRPTTYVPANLAAWNMPRHREYAAVSGGALHFFLDDYRFETVWSSPERLLPRVQAVGAALTPDFSLWRDMPRAAAVWNVYRSRWCGAYWQSQGIEVLPTACWATPDTFDFCFDGIPEGATVAISSMGIRSSKVDQALFRAGLQELLDRKQPRLLLAYGRLRYCDDMNLPEVKEYPTYWDRRRKQVSDAWAEEDPPVAAVPLEPEDATAPGKEPGQAAWVDLEAAVEPPEAAGAV</sequence>
<organismHost>
    <name type="scientific">Mycobacterium</name>
    <dbReference type="NCBI Taxonomy" id="1763"/>
</organismHost>
<gene>
    <name type="primary">1</name>
</gene>
<proteinExistence type="predicted"/>
<feature type="chain" id="PRO_0000164696" description="Gene 1 protein">
    <location>
        <begin position="1"/>
        <end position="270"/>
    </location>
</feature>
<feature type="region of interest" description="Disordered" evidence="1">
    <location>
        <begin position="225"/>
        <end position="249"/>
    </location>
</feature>
<reference key="1">
    <citation type="journal article" date="1998" name="J. Mol. Biol.">
        <title>Genome structure of mycobacteriophage D29: implications for phage evolution.</title>
        <authorList>
            <person name="Ford M.E."/>
            <person name="Sarkis G.J."/>
            <person name="Belanger A.E."/>
            <person name="Hendrix R.W."/>
            <person name="Hatfull G.F."/>
        </authorList>
    </citation>
    <scope>NUCLEOTIDE SEQUENCE [LARGE SCALE GENOMIC DNA]</scope>
</reference>
<organism>
    <name type="scientific">Mycobacterium phage D29</name>
    <name type="common">Mycobacteriophage D29</name>
    <dbReference type="NCBI Taxonomy" id="28369"/>
    <lineage>
        <taxon>Viruses</taxon>
        <taxon>Duplodnaviria</taxon>
        <taxon>Heunggongvirae</taxon>
        <taxon>Uroviricota</taxon>
        <taxon>Caudoviricetes</taxon>
        <taxon>Fromanvirus</taxon>
    </lineage>
</organism>